<organism>
    <name type="scientific">Hepatitis B virus genotype B1 subtype adw (isolate Japan/pJDW233/1988)</name>
    <name type="common">HBV-B</name>
    <dbReference type="NCBI Taxonomy" id="10413"/>
    <lineage>
        <taxon>Viruses</taxon>
        <taxon>Riboviria</taxon>
        <taxon>Pararnavirae</taxon>
        <taxon>Artverviricota</taxon>
        <taxon>Revtraviricetes</taxon>
        <taxon>Blubervirales</taxon>
        <taxon>Hepadnaviridae</taxon>
        <taxon>Orthohepadnavirus</taxon>
        <taxon>Hepatitis B virus</taxon>
    </lineage>
</organism>
<proteinExistence type="inferred from homology"/>
<accession>P0C699</accession>
<reference key="1">
    <citation type="journal article" date="1988" name="J. Gen. Virol.">
        <title>Typing hepatitis B virus by homology in nucleotide sequence: comparison of surface antigen subtypes.</title>
        <authorList>
            <person name="Okamoto H."/>
            <person name="Tsuda F."/>
            <person name="Sakugawa H."/>
            <person name="Sastrosoewignjo R.I."/>
            <person name="Imai M."/>
            <person name="Miyakawa Y."/>
            <person name="Mayumi M."/>
        </authorList>
    </citation>
    <scope>NUCLEOTIDE SEQUENCE [GENOMIC DNA]</scope>
</reference>
<organismHost>
    <name type="scientific">Homo sapiens</name>
    <name type="common">Human</name>
    <dbReference type="NCBI Taxonomy" id="9606"/>
</organismHost>
<organismHost>
    <name type="scientific">Pan troglodytes</name>
    <name type="common">Chimpanzee</name>
    <dbReference type="NCBI Taxonomy" id="9598"/>
</organismHost>
<keyword id="KW-0024">Alternative initiation</keyword>
<keyword id="KW-1015">Disulfide bond</keyword>
<keyword id="KW-1048">Host nucleus</keyword>
<keyword id="KW-0945">Host-virus interaction</keyword>
<keyword id="KW-0677">Repeat</keyword>
<keyword id="KW-0964">Secreted</keyword>
<keyword id="KW-0732">Signal</keyword>
<keyword id="KW-0899">Viral immunoevasion</keyword>
<dbReference type="EMBL" id="D00329">
    <property type="status" value="NOT_ANNOTATED_CDS"/>
    <property type="molecule type" value="Genomic_DNA"/>
</dbReference>
<dbReference type="SMR" id="P0C699"/>
<dbReference type="Proteomes" id="UP000007913">
    <property type="component" value="Segment"/>
</dbReference>
<dbReference type="GO" id="GO:0005576">
    <property type="term" value="C:extracellular region"/>
    <property type="evidence" value="ECO:0007669"/>
    <property type="project" value="UniProtKB-SubCell"/>
</dbReference>
<dbReference type="GO" id="GO:0043657">
    <property type="term" value="C:host cell"/>
    <property type="evidence" value="ECO:0007669"/>
    <property type="project" value="GOC"/>
</dbReference>
<dbReference type="GO" id="GO:0030430">
    <property type="term" value="C:host cell cytoplasm"/>
    <property type="evidence" value="ECO:0007669"/>
    <property type="project" value="UniProtKB-UniRule"/>
</dbReference>
<dbReference type="GO" id="GO:0042025">
    <property type="term" value="C:host cell nucleus"/>
    <property type="evidence" value="ECO:0007669"/>
    <property type="project" value="UniProtKB-SubCell"/>
</dbReference>
<dbReference type="GO" id="GO:0039619">
    <property type="term" value="C:T=4 icosahedral viral capsid"/>
    <property type="evidence" value="ECO:0007669"/>
    <property type="project" value="UniProtKB-UniRule"/>
</dbReference>
<dbReference type="GO" id="GO:0003677">
    <property type="term" value="F:DNA binding"/>
    <property type="evidence" value="ECO:0007669"/>
    <property type="project" value="UniProtKB-UniRule"/>
</dbReference>
<dbReference type="GO" id="GO:0003723">
    <property type="term" value="F:RNA binding"/>
    <property type="evidence" value="ECO:0007669"/>
    <property type="project" value="UniProtKB-UniRule"/>
</dbReference>
<dbReference type="GO" id="GO:0005198">
    <property type="term" value="F:structural molecule activity"/>
    <property type="evidence" value="ECO:0007669"/>
    <property type="project" value="UniProtKB-UniRule"/>
</dbReference>
<dbReference type="GO" id="GO:0075521">
    <property type="term" value="P:microtubule-dependent intracellular transport of viral material towards nucleus"/>
    <property type="evidence" value="ECO:0007669"/>
    <property type="project" value="UniProtKB-UniRule"/>
</dbReference>
<dbReference type="GO" id="GO:0046718">
    <property type="term" value="P:symbiont entry into host cell"/>
    <property type="evidence" value="ECO:0007669"/>
    <property type="project" value="UniProtKB-UniRule"/>
</dbReference>
<dbReference type="GO" id="GO:0075732">
    <property type="term" value="P:viral penetration into host nucleus"/>
    <property type="evidence" value="ECO:0007669"/>
    <property type="project" value="UniProtKB-UniRule"/>
</dbReference>
<dbReference type="FunFam" id="1.10.4090.10:FF:000001">
    <property type="entry name" value="Capsid protein"/>
    <property type="match status" value="1"/>
</dbReference>
<dbReference type="Gene3D" id="1.10.4090.10">
    <property type="entry name" value="Viral capsid, core domain supefamily, Hepatitis B virus"/>
    <property type="match status" value="1"/>
</dbReference>
<dbReference type="HAMAP" id="MF_04076">
    <property type="entry name" value="HBV_HBEAG"/>
    <property type="match status" value="1"/>
</dbReference>
<dbReference type="InterPro" id="IPR013195">
    <property type="entry name" value="Hepatitis_B_virus_capsid_N"/>
</dbReference>
<dbReference type="InterPro" id="IPR002006">
    <property type="entry name" value="Hepatitis_core"/>
</dbReference>
<dbReference type="InterPro" id="IPR036459">
    <property type="entry name" value="Viral_capsid_core_dom_sf_HBV"/>
</dbReference>
<dbReference type="Pfam" id="PF08290">
    <property type="entry name" value="Hep_core_N"/>
    <property type="match status" value="1"/>
</dbReference>
<dbReference type="Pfam" id="PF00906">
    <property type="entry name" value="Hepatitis_core"/>
    <property type="match status" value="3"/>
</dbReference>
<dbReference type="SUPFAM" id="SSF47852">
    <property type="entry name" value="Hepatitis B viral capsid (hbcag)"/>
    <property type="match status" value="1"/>
</dbReference>
<feature type="signal peptide" evidence="2">
    <location>
        <begin position="1"/>
        <end position="19"/>
    </location>
</feature>
<feature type="chain" id="PRO_0000324702" description="External core antigen" evidence="2">
    <location>
        <begin position="20"/>
        <end position="212"/>
    </location>
</feature>
<feature type="propeptide" id="PRO_0000324703" evidence="1">
    <location>
        <begin position="184"/>
        <end position="212"/>
    </location>
</feature>
<feature type="repeat" description="1; half-length">
    <location>
        <begin position="184"/>
        <end position="190"/>
    </location>
</feature>
<feature type="repeat" description="2">
    <location>
        <begin position="191"/>
        <end position="198"/>
    </location>
</feature>
<feature type="repeat" description="3">
    <location>
        <begin position="199"/>
        <end position="206"/>
    </location>
</feature>
<feature type="region of interest" description="HBEAG" evidence="2">
    <location>
        <begin position="25"/>
        <end position="27"/>
    </location>
</feature>
<feature type="region of interest" description="Disordered" evidence="3">
    <location>
        <begin position="165"/>
        <end position="212"/>
    </location>
</feature>
<feature type="region of interest" description="3 X 8 AA repeats of S-P-R-R-R-R-S-Q">
    <location>
        <begin position="184"/>
        <end position="206"/>
    </location>
</feature>
<feature type="compositionally biased region" description="Basic residues" evidence="3">
    <location>
        <begin position="178"/>
        <end position="205"/>
    </location>
</feature>
<feature type="site" description="Cleavage; by host" evidence="2">
    <location>
        <begin position="183"/>
        <end position="184"/>
    </location>
</feature>
<feature type="disulfide bond" description="Interchain" evidence="2">
    <location>
        <position position="77"/>
    </location>
</feature>
<feature type="disulfide bond" description="Interchain" evidence="2">
    <location>
        <position position="90"/>
    </location>
</feature>
<gene>
    <name evidence="2" type="primary">C</name>
</gene>
<evidence type="ECO:0000250" key="1"/>
<evidence type="ECO:0000255" key="2">
    <source>
        <dbReference type="HAMAP-Rule" id="MF_04076"/>
    </source>
</evidence>
<evidence type="ECO:0000256" key="3">
    <source>
        <dbReference type="SAM" id="MobiDB-lite"/>
    </source>
</evidence>
<protein>
    <recommendedName>
        <fullName evidence="2">External core antigen</fullName>
    </recommendedName>
    <alternativeName>
        <fullName evidence="2">HBeAg</fullName>
    </alternativeName>
    <alternativeName>
        <fullName evidence="2">Precore protein</fullName>
    </alternativeName>
    <alternativeName>
        <fullName evidence="2">p25</fullName>
    </alternativeName>
</protein>
<name>HBEAG_HBVB1</name>
<sequence>MQLFHLCLVISCSCPTVQASKLCLGWLWGMDIDPYKEFGATVELLSFLPSDFFPSVRDLLDTVSALYREALKSPEHCSPHHTALRQAILCWGELMTLATWVGNNLEDPASRDLVVNYVNTNMGLKIRQLWWFHISCLTFGRETVLEYLVSFGVWIRTPPAYRPPNAPILSTLPETTVVRRRGRSPRRRTPSPRRRRSQSPRRRRSQSRESQC</sequence>
<comment type="function">
    <text evidence="2">May regulate immune response to the intracellular capsid in acting as a T-cell tolerogen, by having an immunoregulatory effect which prevents destruction of infected cells by cytotoxic T-cells. This immune regulation may predispose to chronicity during perinatal infections and prevent severe liver injury during adult infections.</text>
</comment>
<comment type="subunit">
    <text evidence="2">Homodimerizes.</text>
</comment>
<comment type="subcellular location">
    <subcellularLocation>
        <location evidence="2">Secreted</location>
    </subcellularLocation>
    <subcellularLocation>
        <location evidence="2">Host nucleus</location>
    </subcellularLocation>
</comment>
<comment type="alternative products">
    <event type="alternative initiation"/>
    <isoform>
        <id>P0C699-1</id>
        <name>External core antigen</name>
        <sequence type="displayed"/>
    </isoform>
    <isoform>
        <id>P17391-1</id>
        <name>Capsid protein</name>
        <sequence type="external"/>
    </isoform>
</comment>
<comment type="PTM">
    <text evidence="2">Phosphorylated.</text>
</comment>
<comment type="PTM">
    <text evidence="2">Cleaved by host furin.</text>
</comment>
<comment type="similarity">
    <text evidence="2">Belongs to the orthohepadnavirus precore antigen family.</text>
</comment>